<dbReference type="EC" id="2.6.99.2" evidence="1"/>
<dbReference type="EMBL" id="CP000967">
    <property type="protein sequence ID" value="ACD56679.1"/>
    <property type="molecule type" value="Genomic_DNA"/>
</dbReference>
<dbReference type="RefSeq" id="WP_011257017.1">
    <property type="nucleotide sequence ID" value="NC_010717.2"/>
</dbReference>
<dbReference type="SMR" id="B2SUX4"/>
<dbReference type="KEGG" id="xop:PXO_03472"/>
<dbReference type="eggNOG" id="COG0854">
    <property type="taxonomic scope" value="Bacteria"/>
</dbReference>
<dbReference type="HOGENOM" id="CLU_074563_1_0_6"/>
<dbReference type="UniPathway" id="UPA00244">
    <property type="reaction ID" value="UER00313"/>
</dbReference>
<dbReference type="Proteomes" id="UP000001740">
    <property type="component" value="Chromosome"/>
</dbReference>
<dbReference type="GO" id="GO:0005829">
    <property type="term" value="C:cytosol"/>
    <property type="evidence" value="ECO:0007669"/>
    <property type="project" value="TreeGrafter"/>
</dbReference>
<dbReference type="GO" id="GO:0033856">
    <property type="term" value="F:pyridoxine 5'-phosphate synthase activity"/>
    <property type="evidence" value="ECO:0007669"/>
    <property type="project" value="UniProtKB-EC"/>
</dbReference>
<dbReference type="GO" id="GO:0008615">
    <property type="term" value="P:pyridoxine biosynthetic process"/>
    <property type="evidence" value="ECO:0007669"/>
    <property type="project" value="UniProtKB-UniRule"/>
</dbReference>
<dbReference type="CDD" id="cd00003">
    <property type="entry name" value="PNPsynthase"/>
    <property type="match status" value="1"/>
</dbReference>
<dbReference type="FunFam" id="3.20.20.70:FF:000150">
    <property type="entry name" value="Pyridoxine 5'-phosphate synthase"/>
    <property type="match status" value="1"/>
</dbReference>
<dbReference type="Gene3D" id="3.20.20.70">
    <property type="entry name" value="Aldolase class I"/>
    <property type="match status" value="1"/>
</dbReference>
<dbReference type="HAMAP" id="MF_00279">
    <property type="entry name" value="PdxJ"/>
    <property type="match status" value="1"/>
</dbReference>
<dbReference type="InterPro" id="IPR013785">
    <property type="entry name" value="Aldolase_TIM"/>
</dbReference>
<dbReference type="InterPro" id="IPR004569">
    <property type="entry name" value="PyrdxlP_synth_PdxJ"/>
</dbReference>
<dbReference type="InterPro" id="IPR036130">
    <property type="entry name" value="Pyridoxine-5'_phos_synth"/>
</dbReference>
<dbReference type="NCBIfam" id="TIGR00559">
    <property type="entry name" value="pdxJ"/>
    <property type="match status" value="1"/>
</dbReference>
<dbReference type="NCBIfam" id="NF003626">
    <property type="entry name" value="PRK05265.1-4"/>
    <property type="match status" value="1"/>
</dbReference>
<dbReference type="PANTHER" id="PTHR30456">
    <property type="entry name" value="PYRIDOXINE 5'-PHOSPHATE SYNTHASE"/>
    <property type="match status" value="1"/>
</dbReference>
<dbReference type="PANTHER" id="PTHR30456:SF0">
    <property type="entry name" value="PYRIDOXINE 5'-PHOSPHATE SYNTHASE"/>
    <property type="match status" value="1"/>
</dbReference>
<dbReference type="Pfam" id="PF03740">
    <property type="entry name" value="PdxJ"/>
    <property type="match status" value="1"/>
</dbReference>
<dbReference type="SUPFAM" id="SSF63892">
    <property type="entry name" value="Pyridoxine 5'-phosphate synthase"/>
    <property type="match status" value="1"/>
</dbReference>
<comment type="function">
    <text evidence="1">Catalyzes the complicated ring closure reaction between the two acyclic compounds 1-deoxy-D-xylulose-5-phosphate (DXP) and 3-amino-2-oxopropyl phosphate (1-amino-acetone-3-phosphate or AAP) to form pyridoxine 5'-phosphate (PNP) and inorganic phosphate.</text>
</comment>
<comment type="catalytic activity">
    <reaction evidence="1">
        <text>3-amino-2-oxopropyl phosphate + 1-deoxy-D-xylulose 5-phosphate = pyridoxine 5'-phosphate + phosphate + 2 H2O + H(+)</text>
        <dbReference type="Rhea" id="RHEA:15265"/>
        <dbReference type="ChEBI" id="CHEBI:15377"/>
        <dbReference type="ChEBI" id="CHEBI:15378"/>
        <dbReference type="ChEBI" id="CHEBI:43474"/>
        <dbReference type="ChEBI" id="CHEBI:57279"/>
        <dbReference type="ChEBI" id="CHEBI:57792"/>
        <dbReference type="ChEBI" id="CHEBI:58589"/>
        <dbReference type="EC" id="2.6.99.2"/>
    </reaction>
</comment>
<comment type="pathway">
    <text evidence="1">Cofactor biosynthesis; pyridoxine 5'-phosphate biosynthesis; pyridoxine 5'-phosphate from D-erythrose 4-phosphate: step 5/5.</text>
</comment>
<comment type="subunit">
    <text evidence="1">Homooctamer; tetramer of dimers.</text>
</comment>
<comment type="subcellular location">
    <subcellularLocation>
        <location evidence="1">Cytoplasm</location>
    </subcellularLocation>
</comment>
<comment type="similarity">
    <text evidence="1">Belongs to the PNP synthase family.</text>
</comment>
<keyword id="KW-0963">Cytoplasm</keyword>
<keyword id="KW-0664">Pyridoxine biosynthesis</keyword>
<keyword id="KW-0808">Transferase</keyword>
<feature type="chain" id="PRO_1000114831" description="Pyridoxine 5'-phosphate synthase">
    <location>
        <begin position="1"/>
        <end position="255"/>
    </location>
</feature>
<feature type="active site" description="Proton acceptor" evidence="1">
    <location>
        <position position="44"/>
    </location>
</feature>
<feature type="active site" description="Proton acceptor" evidence="1">
    <location>
        <position position="74"/>
    </location>
</feature>
<feature type="active site" description="Proton donor" evidence="1">
    <location>
        <position position="202"/>
    </location>
</feature>
<feature type="binding site" evidence="1">
    <location>
        <position position="8"/>
    </location>
    <ligand>
        <name>3-amino-2-oxopropyl phosphate</name>
        <dbReference type="ChEBI" id="CHEBI:57279"/>
    </ligand>
</feature>
<feature type="binding site" evidence="1">
    <location>
        <position position="19"/>
    </location>
    <ligand>
        <name>3-amino-2-oxopropyl phosphate</name>
        <dbReference type="ChEBI" id="CHEBI:57279"/>
    </ligand>
</feature>
<feature type="binding site" evidence="1">
    <location>
        <position position="46"/>
    </location>
    <ligand>
        <name>1-deoxy-D-xylulose 5-phosphate</name>
        <dbReference type="ChEBI" id="CHEBI:57792"/>
    </ligand>
</feature>
<feature type="binding site" evidence="1">
    <location>
        <position position="51"/>
    </location>
    <ligand>
        <name>1-deoxy-D-xylulose 5-phosphate</name>
        <dbReference type="ChEBI" id="CHEBI:57792"/>
    </ligand>
</feature>
<feature type="binding site" evidence="1">
    <location>
        <position position="111"/>
    </location>
    <ligand>
        <name>1-deoxy-D-xylulose 5-phosphate</name>
        <dbReference type="ChEBI" id="CHEBI:57792"/>
    </ligand>
</feature>
<feature type="binding site" evidence="1">
    <location>
        <position position="203"/>
    </location>
    <ligand>
        <name>3-amino-2-oxopropyl phosphate</name>
        <dbReference type="ChEBI" id="CHEBI:57279"/>
    </ligand>
</feature>
<feature type="binding site" evidence="1">
    <location>
        <begin position="225"/>
        <end position="226"/>
    </location>
    <ligand>
        <name>3-amino-2-oxopropyl phosphate</name>
        <dbReference type="ChEBI" id="CHEBI:57279"/>
    </ligand>
</feature>
<feature type="site" description="Transition state stabilizer" evidence="1">
    <location>
        <position position="162"/>
    </location>
</feature>
<accession>B2SUX4</accession>
<reference key="1">
    <citation type="journal article" date="2008" name="BMC Genomics">
        <title>Genome sequence and rapid evolution of the rice pathogen Xanthomonas oryzae pv. oryzae PXO99A.</title>
        <authorList>
            <person name="Salzberg S.L."/>
            <person name="Sommer D.D."/>
            <person name="Schatz M.C."/>
            <person name="Phillippy A.M."/>
            <person name="Rabinowicz P.D."/>
            <person name="Tsuge S."/>
            <person name="Furutani A."/>
            <person name="Ochiai H."/>
            <person name="Delcher A.L."/>
            <person name="Kelley D."/>
            <person name="Madupu R."/>
            <person name="Puiu D."/>
            <person name="Radune D."/>
            <person name="Shumway M."/>
            <person name="Trapnell C."/>
            <person name="Aparna G."/>
            <person name="Jha G."/>
            <person name="Pandey A."/>
            <person name="Patil P.B."/>
            <person name="Ishihara H."/>
            <person name="Meyer D.F."/>
            <person name="Szurek B."/>
            <person name="Verdier V."/>
            <person name="Koebnik R."/>
            <person name="Dow J.M."/>
            <person name="Ryan R.P."/>
            <person name="Hirata H."/>
            <person name="Tsuyumu S."/>
            <person name="Won Lee S."/>
            <person name="Seo Y.-S."/>
            <person name="Sriariyanum M."/>
            <person name="Ronald P.C."/>
            <person name="Sonti R.V."/>
            <person name="Van Sluys M.-A."/>
            <person name="Leach J.E."/>
            <person name="White F.F."/>
            <person name="Bogdanove A.J."/>
        </authorList>
    </citation>
    <scope>NUCLEOTIDE SEQUENCE [LARGE SCALE GENOMIC DNA]</scope>
    <source>
        <strain>PXO99A</strain>
    </source>
</reference>
<name>PDXJ_XANOP</name>
<protein>
    <recommendedName>
        <fullName evidence="1">Pyridoxine 5'-phosphate synthase</fullName>
        <shortName evidence="1">PNP synthase</shortName>
        <ecNumber evidence="1">2.6.99.2</ecNumber>
    </recommendedName>
</protein>
<organism>
    <name type="scientific">Xanthomonas oryzae pv. oryzae (strain PXO99A)</name>
    <dbReference type="NCBI Taxonomy" id="360094"/>
    <lineage>
        <taxon>Bacteria</taxon>
        <taxon>Pseudomonadati</taxon>
        <taxon>Pseudomonadota</taxon>
        <taxon>Gammaproteobacteria</taxon>
        <taxon>Lysobacterales</taxon>
        <taxon>Lysobacteraceae</taxon>
        <taxon>Xanthomonas</taxon>
    </lineage>
</organism>
<proteinExistence type="inferred from homology"/>
<gene>
    <name evidence="1" type="primary">pdxJ</name>
    <name type="ordered locus">PXO_03472</name>
</gene>
<sequence length="255" mass="26400">MTTQLSVNVNKIAVLRNSRGGTDPDVLQAARTCIAAGAHGITVHPRPDQRHIRAGDVLALSALTREHAVEFNIEGNPFAPPRAGYPGLLELCRATRPEQITLVPDGDGQLTSDHGFDFAQDTTQLAELIAAFKAVGSRVSLFVDAGNPDIAGAAALGADRVELYTGPYAHAHASGQTDTALALFADAGRRASAAGLGINAGHDLSQANLGDFLAAVPGVLEVSIGHALIGEALYQGLEATVRAYVDILRGSQVGA</sequence>
<evidence type="ECO:0000255" key="1">
    <source>
        <dbReference type="HAMAP-Rule" id="MF_00279"/>
    </source>
</evidence>